<keyword id="KW-0004">4Fe-4S</keyword>
<keyword id="KW-0963">Cytoplasm</keyword>
<keyword id="KW-1015">Disulfide bond</keyword>
<keyword id="KW-0408">Iron</keyword>
<keyword id="KW-0411">Iron-sulfur</keyword>
<keyword id="KW-0479">Metal-binding</keyword>
<keyword id="KW-0489">Methyltransferase</keyword>
<keyword id="KW-1185">Reference proteome</keyword>
<keyword id="KW-0698">rRNA processing</keyword>
<keyword id="KW-0949">S-adenosyl-L-methionine</keyword>
<keyword id="KW-0808">Transferase</keyword>
<keyword id="KW-0819">tRNA processing</keyword>
<name>RLMN_BRADU</name>
<comment type="function">
    <text evidence="1">Specifically methylates position 2 of adenine 2503 in 23S rRNA and position 2 of adenine 37 in tRNAs. m2A2503 modification seems to play a crucial role in the proofreading step occurring at the peptidyl transferase center and thus would serve to optimize ribosomal fidelity.</text>
</comment>
<comment type="catalytic activity">
    <reaction evidence="1">
        <text>adenosine(2503) in 23S rRNA + 2 reduced [2Fe-2S]-[ferredoxin] + 2 S-adenosyl-L-methionine = 2-methyladenosine(2503) in 23S rRNA + 5'-deoxyadenosine + L-methionine + 2 oxidized [2Fe-2S]-[ferredoxin] + S-adenosyl-L-homocysteine</text>
        <dbReference type="Rhea" id="RHEA:42916"/>
        <dbReference type="Rhea" id="RHEA-COMP:10000"/>
        <dbReference type="Rhea" id="RHEA-COMP:10001"/>
        <dbReference type="Rhea" id="RHEA-COMP:10152"/>
        <dbReference type="Rhea" id="RHEA-COMP:10282"/>
        <dbReference type="ChEBI" id="CHEBI:17319"/>
        <dbReference type="ChEBI" id="CHEBI:33737"/>
        <dbReference type="ChEBI" id="CHEBI:33738"/>
        <dbReference type="ChEBI" id="CHEBI:57844"/>
        <dbReference type="ChEBI" id="CHEBI:57856"/>
        <dbReference type="ChEBI" id="CHEBI:59789"/>
        <dbReference type="ChEBI" id="CHEBI:74411"/>
        <dbReference type="ChEBI" id="CHEBI:74497"/>
        <dbReference type="EC" id="2.1.1.192"/>
    </reaction>
</comment>
<comment type="catalytic activity">
    <reaction evidence="1">
        <text>adenosine(37) in tRNA + 2 reduced [2Fe-2S]-[ferredoxin] + 2 S-adenosyl-L-methionine = 2-methyladenosine(37) in tRNA + 5'-deoxyadenosine + L-methionine + 2 oxidized [2Fe-2S]-[ferredoxin] + S-adenosyl-L-homocysteine</text>
        <dbReference type="Rhea" id="RHEA:43332"/>
        <dbReference type="Rhea" id="RHEA-COMP:10000"/>
        <dbReference type="Rhea" id="RHEA-COMP:10001"/>
        <dbReference type="Rhea" id="RHEA-COMP:10162"/>
        <dbReference type="Rhea" id="RHEA-COMP:10485"/>
        <dbReference type="ChEBI" id="CHEBI:17319"/>
        <dbReference type="ChEBI" id="CHEBI:33737"/>
        <dbReference type="ChEBI" id="CHEBI:33738"/>
        <dbReference type="ChEBI" id="CHEBI:57844"/>
        <dbReference type="ChEBI" id="CHEBI:57856"/>
        <dbReference type="ChEBI" id="CHEBI:59789"/>
        <dbReference type="ChEBI" id="CHEBI:74411"/>
        <dbReference type="ChEBI" id="CHEBI:74497"/>
        <dbReference type="EC" id="2.1.1.192"/>
    </reaction>
</comment>
<comment type="cofactor">
    <cofactor evidence="1">
        <name>[4Fe-4S] cluster</name>
        <dbReference type="ChEBI" id="CHEBI:49883"/>
    </cofactor>
    <text evidence="1">Binds 1 [4Fe-4S] cluster. The cluster is coordinated with 3 cysteines and an exchangeable S-adenosyl-L-methionine.</text>
</comment>
<comment type="subcellular location">
    <subcellularLocation>
        <location evidence="1">Cytoplasm</location>
    </subcellularLocation>
</comment>
<comment type="miscellaneous">
    <text evidence="1">Reaction proceeds by a ping-pong mechanism involving intermediate methylation of a conserved cysteine residue.</text>
</comment>
<comment type="similarity">
    <text evidence="1">Belongs to the radical SAM superfamily. RlmN family.</text>
</comment>
<accession>Q89X03</accession>
<organism>
    <name type="scientific">Bradyrhizobium diazoefficiens (strain JCM 10833 / BCRC 13528 / IAM 13628 / NBRC 14792 / USDA 110)</name>
    <dbReference type="NCBI Taxonomy" id="224911"/>
    <lineage>
        <taxon>Bacteria</taxon>
        <taxon>Pseudomonadati</taxon>
        <taxon>Pseudomonadota</taxon>
        <taxon>Alphaproteobacteria</taxon>
        <taxon>Hyphomicrobiales</taxon>
        <taxon>Nitrobacteraceae</taxon>
        <taxon>Bradyrhizobium</taxon>
    </lineage>
</organism>
<gene>
    <name evidence="1" type="primary">rlmN</name>
    <name type="ordered locus">bll0525</name>
</gene>
<sequence length="400" mass="44866">MQPTTEPHNAILVEKTPLETYVPPAKPSLIGLSRNELADRLGEIGVAPAQRKMRVQQLWHWMYFRGAQNFDEMTSISKGIRAELAQHFTVDRPEVVAEQISNDGTRKWLLRLPSGDNVEKAHEVECVYIPETDRGTLCVSSQVGCTLNCSFCHTGTQRLVRNLTAGEIVGQVMVARDRLNDWADREDGTRRVTNIVMMGMGEPLYNFDAVRDALLIVGDNEGIGISRRRITLSTSGVVPNIVRAGEEIGVMLAISLHAVRDELRNELVPLNRKYPIKELLQACRDYPGASNARRITFEYVMLKGVNDSLDDAKLLVKLLKGIHAKINLIPFNPWPGTAYECSDWDQIEKFSEYIFNAGYSSPVRTPRGRDILAACGQLKSETEKLSARERQTLRAMAMTD</sequence>
<reference key="1">
    <citation type="journal article" date="2002" name="DNA Res.">
        <title>Complete genomic sequence of nitrogen-fixing symbiotic bacterium Bradyrhizobium japonicum USDA110.</title>
        <authorList>
            <person name="Kaneko T."/>
            <person name="Nakamura Y."/>
            <person name="Sato S."/>
            <person name="Minamisawa K."/>
            <person name="Uchiumi T."/>
            <person name="Sasamoto S."/>
            <person name="Watanabe A."/>
            <person name="Idesawa K."/>
            <person name="Iriguchi M."/>
            <person name="Kawashima K."/>
            <person name="Kohara M."/>
            <person name="Matsumoto M."/>
            <person name="Shimpo S."/>
            <person name="Tsuruoka H."/>
            <person name="Wada T."/>
            <person name="Yamada M."/>
            <person name="Tabata S."/>
        </authorList>
    </citation>
    <scope>NUCLEOTIDE SEQUENCE [LARGE SCALE GENOMIC DNA]</scope>
    <source>
        <strain>JCM 10833 / BCRC 13528 / IAM 13628 / NBRC 14792 / USDA 110</strain>
    </source>
</reference>
<feature type="chain" id="PRO_0000350059" description="Dual-specificity RNA methyltransferase RlmN">
    <location>
        <begin position="1"/>
        <end position="400"/>
    </location>
</feature>
<feature type="domain" description="Radical SAM core" evidence="2">
    <location>
        <begin position="131"/>
        <end position="372"/>
    </location>
</feature>
<feature type="active site" description="Proton acceptor" evidence="1">
    <location>
        <position position="125"/>
    </location>
</feature>
<feature type="active site" description="S-methylcysteine intermediate" evidence="1">
    <location>
        <position position="375"/>
    </location>
</feature>
<feature type="binding site" evidence="1">
    <location>
        <position position="145"/>
    </location>
    <ligand>
        <name>[4Fe-4S] cluster</name>
        <dbReference type="ChEBI" id="CHEBI:49883"/>
        <note>4Fe-4S-S-AdoMet</note>
    </ligand>
</feature>
<feature type="binding site" evidence="1">
    <location>
        <position position="149"/>
    </location>
    <ligand>
        <name>[4Fe-4S] cluster</name>
        <dbReference type="ChEBI" id="CHEBI:49883"/>
        <note>4Fe-4S-S-AdoMet</note>
    </ligand>
</feature>
<feature type="binding site" evidence="1">
    <location>
        <position position="152"/>
    </location>
    <ligand>
        <name>[4Fe-4S] cluster</name>
        <dbReference type="ChEBI" id="CHEBI:49883"/>
        <note>4Fe-4S-S-AdoMet</note>
    </ligand>
</feature>
<feature type="binding site" evidence="1">
    <location>
        <begin position="201"/>
        <end position="202"/>
    </location>
    <ligand>
        <name>S-adenosyl-L-methionine</name>
        <dbReference type="ChEBI" id="CHEBI:59789"/>
    </ligand>
</feature>
<feature type="binding site" evidence="1">
    <location>
        <position position="233"/>
    </location>
    <ligand>
        <name>S-adenosyl-L-methionine</name>
        <dbReference type="ChEBI" id="CHEBI:59789"/>
    </ligand>
</feature>
<feature type="binding site" evidence="1">
    <location>
        <begin position="255"/>
        <end position="257"/>
    </location>
    <ligand>
        <name>S-adenosyl-L-methionine</name>
        <dbReference type="ChEBI" id="CHEBI:59789"/>
    </ligand>
</feature>
<feature type="binding site" evidence="1">
    <location>
        <position position="332"/>
    </location>
    <ligand>
        <name>S-adenosyl-L-methionine</name>
        <dbReference type="ChEBI" id="CHEBI:59789"/>
    </ligand>
</feature>
<feature type="disulfide bond" description="(transient)" evidence="1">
    <location>
        <begin position="138"/>
        <end position="375"/>
    </location>
</feature>
<dbReference type="EC" id="2.1.1.192" evidence="1"/>
<dbReference type="EMBL" id="BA000040">
    <property type="protein sequence ID" value="BAC45790.1"/>
    <property type="molecule type" value="Genomic_DNA"/>
</dbReference>
<dbReference type="RefSeq" id="NP_767165.1">
    <property type="nucleotide sequence ID" value="NC_004463.1"/>
</dbReference>
<dbReference type="RefSeq" id="WP_011083356.1">
    <property type="nucleotide sequence ID" value="NC_004463.1"/>
</dbReference>
<dbReference type="SMR" id="Q89X03"/>
<dbReference type="FunCoup" id="Q89X03">
    <property type="interactions" value="656"/>
</dbReference>
<dbReference type="STRING" id="224911.AAV28_41890"/>
<dbReference type="EnsemblBacteria" id="BAC45790">
    <property type="protein sequence ID" value="BAC45790"/>
    <property type="gene ID" value="BAC45790"/>
</dbReference>
<dbReference type="GeneID" id="46495669"/>
<dbReference type="KEGG" id="bja:bll0525"/>
<dbReference type="PATRIC" id="fig|224911.44.peg.9065"/>
<dbReference type="eggNOG" id="COG0820">
    <property type="taxonomic scope" value="Bacteria"/>
</dbReference>
<dbReference type="HOGENOM" id="CLU_029101_2_0_5"/>
<dbReference type="InParanoid" id="Q89X03"/>
<dbReference type="OrthoDB" id="9793973at2"/>
<dbReference type="PhylomeDB" id="Q89X03"/>
<dbReference type="Proteomes" id="UP000002526">
    <property type="component" value="Chromosome"/>
</dbReference>
<dbReference type="GO" id="GO:0005737">
    <property type="term" value="C:cytoplasm"/>
    <property type="evidence" value="ECO:0007669"/>
    <property type="project" value="UniProtKB-SubCell"/>
</dbReference>
<dbReference type="GO" id="GO:0051539">
    <property type="term" value="F:4 iron, 4 sulfur cluster binding"/>
    <property type="evidence" value="ECO:0007669"/>
    <property type="project" value="UniProtKB-UniRule"/>
</dbReference>
<dbReference type="GO" id="GO:0046872">
    <property type="term" value="F:metal ion binding"/>
    <property type="evidence" value="ECO:0007669"/>
    <property type="project" value="UniProtKB-KW"/>
</dbReference>
<dbReference type="GO" id="GO:0070040">
    <property type="term" value="F:rRNA (adenine(2503)-C2-)-methyltransferase activity"/>
    <property type="evidence" value="ECO:0007669"/>
    <property type="project" value="UniProtKB-UniRule"/>
</dbReference>
<dbReference type="GO" id="GO:0019843">
    <property type="term" value="F:rRNA binding"/>
    <property type="evidence" value="ECO:0007669"/>
    <property type="project" value="UniProtKB-UniRule"/>
</dbReference>
<dbReference type="GO" id="GO:0002935">
    <property type="term" value="F:tRNA (adenine(37)-C2)-methyltransferase activity"/>
    <property type="evidence" value="ECO:0007669"/>
    <property type="project" value="UniProtKB-UniRule"/>
</dbReference>
<dbReference type="GO" id="GO:0000049">
    <property type="term" value="F:tRNA binding"/>
    <property type="evidence" value="ECO:0007669"/>
    <property type="project" value="UniProtKB-UniRule"/>
</dbReference>
<dbReference type="GO" id="GO:0070475">
    <property type="term" value="P:rRNA base methylation"/>
    <property type="evidence" value="ECO:0000318"/>
    <property type="project" value="GO_Central"/>
</dbReference>
<dbReference type="GO" id="GO:0030488">
    <property type="term" value="P:tRNA methylation"/>
    <property type="evidence" value="ECO:0000318"/>
    <property type="project" value="GO_Central"/>
</dbReference>
<dbReference type="CDD" id="cd01335">
    <property type="entry name" value="Radical_SAM"/>
    <property type="match status" value="1"/>
</dbReference>
<dbReference type="FunFam" id="3.20.20.70:FF:000008">
    <property type="entry name" value="Dual-specificity RNA methyltransferase RlmN"/>
    <property type="match status" value="1"/>
</dbReference>
<dbReference type="Gene3D" id="1.10.150.530">
    <property type="match status" value="1"/>
</dbReference>
<dbReference type="Gene3D" id="3.20.20.70">
    <property type="entry name" value="Aldolase class I"/>
    <property type="match status" value="1"/>
</dbReference>
<dbReference type="HAMAP" id="MF_01849">
    <property type="entry name" value="RNA_methyltr_RlmN"/>
    <property type="match status" value="1"/>
</dbReference>
<dbReference type="InterPro" id="IPR013785">
    <property type="entry name" value="Aldolase_TIM"/>
</dbReference>
<dbReference type="InterPro" id="IPR006638">
    <property type="entry name" value="Elp3/MiaA/NifB-like_rSAM"/>
</dbReference>
<dbReference type="InterPro" id="IPR040072">
    <property type="entry name" value="Methyltransferase_A"/>
</dbReference>
<dbReference type="InterPro" id="IPR048641">
    <property type="entry name" value="RlmN_N"/>
</dbReference>
<dbReference type="InterPro" id="IPR027492">
    <property type="entry name" value="RNA_MTrfase_RlmN"/>
</dbReference>
<dbReference type="InterPro" id="IPR004383">
    <property type="entry name" value="rRNA_lsu_MTrfase_RlmN/Cfr"/>
</dbReference>
<dbReference type="InterPro" id="IPR007197">
    <property type="entry name" value="rSAM"/>
</dbReference>
<dbReference type="NCBIfam" id="TIGR00048">
    <property type="entry name" value="rRNA_mod_RlmN"/>
    <property type="match status" value="1"/>
</dbReference>
<dbReference type="PANTHER" id="PTHR30544">
    <property type="entry name" value="23S RRNA METHYLTRANSFERASE"/>
    <property type="match status" value="1"/>
</dbReference>
<dbReference type="PANTHER" id="PTHR30544:SF5">
    <property type="entry name" value="RADICAL SAM CORE DOMAIN-CONTAINING PROTEIN"/>
    <property type="match status" value="1"/>
</dbReference>
<dbReference type="Pfam" id="PF04055">
    <property type="entry name" value="Radical_SAM"/>
    <property type="match status" value="1"/>
</dbReference>
<dbReference type="Pfam" id="PF21016">
    <property type="entry name" value="RlmN_N"/>
    <property type="match status" value="1"/>
</dbReference>
<dbReference type="PIRSF" id="PIRSF006004">
    <property type="entry name" value="CHP00048"/>
    <property type="match status" value="1"/>
</dbReference>
<dbReference type="SFLD" id="SFLDF00275">
    <property type="entry name" value="adenosine_C2_methyltransferase"/>
    <property type="match status" value="1"/>
</dbReference>
<dbReference type="SFLD" id="SFLDS00029">
    <property type="entry name" value="Radical_SAM"/>
    <property type="match status" value="1"/>
</dbReference>
<dbReference type="SMART" id="SM00729">
    <property type="entry name" value="Elp3"/>
    <property type="match status" value="1"/>
</dbReference>
<dbReference type="SUPFAM" id="SSF102114">
    <property type="entry name" value="Radical SAM enzymes"/>
    <property type="match status" value="1"/>
</dbReference>
<dbReference type="PROSITE" id="PS51918">
    <property type="entry name" value="RADICAL_SAM"/>
    <property type="match status" value="1"/>
</dbReference>
<proteinExistence type="inferred from homology"/>
<protein>
    <recommendedName>
        <fullName evidence="1">Dual-specificity RNA methyltransferase RlmN</fullName>
        <ecNumber evidence="1">2.1.1.192</ecNumber>
    </recommendedName>
    <alternativeName>
        <fullName evidence="1">23S rRNA (adenine(2503)-C(2))-methyltransferase</fullName>
    </alternativeName>
    <alternativeName>
        <fullName evidence="1">23S rRNA m2A2503 methyltransferase</fullName>
    </alternativeName>
    <alternativeName>
        <fullName evidence="1">Ribosomal RNA large subunit methyltransferase N</fullName>
    </alternativeName>
    <alternativeName>
        <fullName evidence="1">tRNA (adenine(37)-C(2))-methyltransferase</fullName>
    </alternativeName>
    <alternativeName>
        <fullName evidence="1">tRNA m2A37 methyltransferase</fullName>
    </alternativeName>
</protein>
<evidence type="ECO:0000255" key="1">
    <source>
        <dbReference type="HAMAP-Rule" id="MF_01849"/>
    </source>
</evidence>
<evidence type="ECO:0000255" key="2">
    <source>
        <dbReference type="PROSITE-ProRule" id="PRU01266"/>
    </source>
</evidence>